<proteinExistence type="inferred from homology"/>
<feature type="chain" id="PRO_0000107244" description="Probable DNA double-strand break repair nuclease NurA">
    <location>
        <begin position="1"/>
        <end position="389"/>
    </location>
</feature>
<feature type="binding site" evidence="1">
    <location>
        <position position="74"/>
    </location>
    <ligand>
        <name>Mn(2+)</name>
        <dbReference type="ChEBI" id="CHEBI:29035"/>
    </ligand>
</feature>
<feature type="binding site" evidence="1">
    <location>
        <position position="151"/>
    </location>
    <ligand>
        <name>Mn(2+)</name>
        <dbReference type="ChEBI" id="CHEBI:29035"/>
    </ligand>
</feature>
<protein>
    <recommendedName>
        <fullName evidence="1">Probable DNA double-strand break repair nuclease NurA</fullName>
        <ecNumber evidence="1">3.1.-.-</ecNumber>
    </recommendedName>
</protein>
<name>NURA_METJA</name>
<comment type="function">
    <text evidence="1">Involved in DNA double-strand break (DSB) repair (By similarity). Probably acts with HerA to stimulate resection of the 5' strand and produce the long 3' single-strand that is required for RadA loading (By similarity).</text>
</comment>
<comment type="cofactor">
    <cofactor evidence="1">
        <name>Mn(2+)</name>
        <dbReference type="ChEBI" id="CHEBI:29035"/>
    </cofactor>
</comment>
<comment type="similarity">
    <text evidence="2">Belongs to the NurA family.</text>
</comment>
<gene>
    <name evidence="1" type="primary">nurA</name>
    <name evidence="3" type="ordered locus">MJ1262</name>
</gene>
<reference key="1">
    <citation type="journal article" date="1996" name="Science">
        <title>Complete genome sequence of the methanogenic archaeon, Methanococcus jannaschii.</title>
        <authorList>
            <person name="Bult C.J."/>
            <person name="White O."/>
            <person name="Olsen G.J."/>
            <person name="Zhou L."/>
            <person name="Fleischmann R.D."/>
            <person name="Sutton G.G."/>
            <person name="Blake J.A."/>
            <person name="FitzGerald L.M."/>
            <person name="Clayton R.A."/>
            <person name="Gocayne J.D."/>
            <person name="Kerlavage A.R."/>
            <person name="Dougherty B.A."/>
            <person name="Tomb J.-F."/>
            <person name="Adams M.D."/>
            <person name="Reich C.I."/>
            <person name="Overbeek R."/>
            <person name="Kirkness E.F."/>
            <person name="Weinstock K.G."/>
            <person name="Merrick J.M."/>
            <person name="Glodek A."/>
            <person name="Scott J.L."/>
            <person name="Geoghagen N.S.M."/>
            <person name="Weidman J.F."/>
            <person name="Fuhrmann J.L."/>
            <person name="Nguyen D."/>
            <person name="Utterback T.R."/>
            <person name="Kelley J.M."/>
            <person name="Peterson J.D."/>
            <person name="Sadow P.W."/>
            <person name="Hanna M.C."/>
            <person name="Cotton M.D."/>
            <person name="Roberts K.M."/>
            <person name="Hurst M.A."/>
            <person name="Kaine B.P."/>
            <person name="Borodovsky M."/>
            <person name="Klenk H.-P."/>
            <person name="Fraser C.M."/>
            <person name="Smith H.O."/>
            <person name="Woese C.R."/>
            <person name="Venter J.C."/>
        </authorList>
    </citation>
    <scope>NUCLEOTIDE SEQUENCE [LARGE SCALE GENOMIC DNA]</scope>
    <source>
        <strain>ATCC 43067 / DSM 2661 / JAL-1 / JCM 10045 / NBRC 100440</strain>
    </source>
</reference>
<sequence>MFFKIFVENTVILPNPLILTKIEGLLMIEYLLKNREQIIKKMEKINDINRKEVEEKWILDNFENPKDMGFAGGDGSCNKLDYISFSFYGVGAVSFIHGRGEKVKKAKEEYIFDITHPLDIEDRIRRYMLTLELKTALYVLKNYNIDYYIFDGSLFSLLIFTKKGIEMYERELEEIYNEYGKEFNKKIDEETKSGEIGIISKDLNLELNKKILVEHVEYILTLTKLINEFKDRIIGISKTSKINIYFDKNMPDIAIFTKYTDKSGYSEPIDFVNKLGDEKKEKHKQLSSVVKGINFIKNKPFYAKIDTAYIQFVRLEDNCGVVGLTSFNKIDKEVLSSLKEISINGYPYILKKSHETVEITTKKLEAIAKLLNIDDPIARHILGKKKKKF</sequence>
<organism>
    <name type="scientific">Methanocaldococcus jannaschii (strain ATCC 43067 / DSM 2661 / JAL-1 / JCM 10045 / NBRC 100440)</name>
    <name type="common">Methanococcus jannaschii</name>
    <dbReference type="NCBI Taxonomy" id="243232"/>
    <lineage>
        <taxon>Archaea</taxon>
        <taxon>Methanobacteriati</taxon>
        <taxon>Methanobacteriota</taxon>
        <taxon>Methanomada group</taxon>
        <taxon>Methanococci</taxon>
        <taxon>Methanococcales</taxon>
        <taxon>Methanocaldococcaceae</taxon>
        <taxon>Methanocaldococcus</taxon>
    </lineage>
</organism>
<evidence type="ECO:0000250" key="1">
    <source>
        <dbReference type="UniProtKB" id="Q8U1N8"/>
    </source>
</evidence>
<evidence type="ECO:0000305" key="2"/>
<evidence type="ECO:0000312" key="3">
    <source>
        <dbReference type="EMBL" id="AAB99265.1"/>
    </source>
</evidence>
<keyword id="KW-0227">DNA damage</keyword>
<keyword id="KW-0234">DNA repair</keyword>
<keyword id="KW-0238">DNA-binding</keyword>
<keyword id="KW-0255">Endonuclease</keyword>
<keyword id="KW-0269">Exonuclease</keyword>
<keyword id="KW-0378">Hydrolase</keyword>
<keyword id="KW-0464">Manganese</keyword>
<keyword id="KW-0479">Metal-binding</keyword>
<keyword id="KW-0540">Nuclease</keyword>
<keyword id="KW-1185">Reference proteome</keyword>
<dbReference type="EC" id="3.1.-.-" evidence="1"/>
<dbReference type="EMBL" id="L77117">
    <property type="protein sequence ID" value="AAB99265.1"/>
    <property type="molecule type" value="Genomic_DNA"/>
</dbReference>
<dbReference type="PIR" id="E64457">
    <property type="entry name" value="E64457"/>
</dbReference>
<dbReference type="RefSeq" id="WP_010870775.1">
    <property type="nucleotide sequence ID" value="NC_000909.1"/>
</dbReference>
<dbReference type="SMR" id="Q58658"/>
<dbReference type="STRING" id="243232.MJ_1262"/>
<dbReference type="PaxDb" id="243232-MJ_1262"/>
<dbReference type="EnsemblBacteria" id="AAB99265">
    <property type="protein sequence ID" value="AAB99265"/>
    <property type="gene ID" value="MJ_1262"/>
</dbReference>
<dbReference type="GeneID" id="1452160"/>
<dbReference type="KEGG" id="mja:MJ_1262"/>
<dbReference type="eggNOG" id="arCOG00367">
    <property type="taxonomic scope" value="Archaea"/>
</dbReference>
<dbReference type="HOGENOM" id="CLU_056881_0_0_2"/>
<dbReference type="InParanoid" id="Q58658"/>
<dbReference type="PhylomeDB" id="Q58658"/>
<dbReference type="Proteomes" id="UP000000805">
    <property type="component" value="Chromosome"/>
</dbReference>
<dbReference type="GO" id="GO:0046872">
    <property type="term" value="F:metal ion binding"/>
    <property type="evidence" value="ECO:0007669"/>
    <property type="project" value="UniProtKB-KW"/>
</dbReference>
<dbReference type="GO" id="GO:0004518">
    <property type="term" value="F:nuclease activity"/>
    <property type="evidence" value="ECO:0007669"/>
    <property type="project" value="UniProtKB-KW"/>
</dbReference>
<dbReference type="GO" id="GO:0006281">
    <property type="term" value="P:DNA repair"/>
    <property type="evidence" value="ECO:0007669"/>
    <property type="project" value="UniProtKB-KW"/>
</dbReference>
<dbReference type="InterPro" id="IPR018977">
    <property type="entry name" value="NurA_domain"/>
</dbReference>
<dbReference type="Pfam" id="PF09376">
    <property type="entry name" value="NurA"/>
    <property type="match status" value="1"/>
</dbReference>
<dbReference type="SMART" id="SM00933">
    <property type="entry name" value="NurA"/>
    <property type="match status" value="1"/>
</dbReference>
<accession>Q58658</accession>